<feature type="chain" id="PRO_0000186584" description="PTS system lactose-specific EIICB component">
    <location>
        <begin position="1"/>
        <end position="568"/>
    </location>
</feature>
<feature type="transmembrane region" description="Helical" evidence="3">
    <location>
        <begin position="30"/>
        <end position="50"/>
    </location>
</feature>
<feature type="transmembrane region" description="Helical" evidence="3">
    <location>
        <begin position="62"/>
        <end position="82"/>
    </location>
</feature>
<feature type="transmembrane region" description="Helical" evidence="3">
    <location>
        <begin position="103"/>
        <end position="123"/>
    </location>
</feature>
<feature type="transmembrane region" description="Helical" evidence="3">
    <location>
        <begin position="128"/>
        <end position="148"/>
    </location>
</feature>
<feature type="transmembrane region" description="Helical" evidence="3">
    <location>
        <begin position="183"/>
        <end position="203"/>
    </location>
</feature>
<feature type="transmembrane region" description="Helical" evidence="3">
    <location>
        <begin position="222"/>
        <end position="242"/>
    </location>
</feature>
<feature type="transmembrane region" description="Helical" evidence="3">
    <location>
        <begin position="283"/>
        <end position="303"/>
    </location>
</feature>
<feature type="transmembrane region" description="Helical" evidence="3">
    <location>
        <begin position="339"/>
        <end position="359"/>
    </location>
</feature>
<feature type="transmembrane region" description="Helical" evidence="3">
    <location>
        <begin position="389"/>
        <end position="409"/>
    </location>
</feature>
<feature type="domain" description="PTS EIIC type-3" evidence="3">
    <location>
        <begin position="7"/>
        <end position="409"/>
    </location>
</feature>
<feature type="domain" description="PTS EIIB type-3" evidence="2">
    <location>
        <begin position="466"/>
        <end position="568"/>
    </location>
</feature>
<feature type="active site" description="Phosphocysteine intermediate; for EIIB activity" evidence="1">
    <location>
        <position position="473"/>
    </location>
</feature>
<feature type="modified residue" description="Phosphocysteine; by EIIA" evidence="1 2">
    <location>
        <position position="473"/>
    </location>
</feature>
<sequence>MHKLIELIEKGKPFFEKISRNIYLRAIRDGFIAGMPVILFSSIFILIAYVPNAWGFHWSKDIETFLMTPYSYSMGILAFFVGGTTAKALTDSKNRDLPATNQINFLSTMLASMVGFLLMAAEPAKEGGFLTAFMGTKGLLTAFIAAFVTVNVYKVCVKNNVTIRMPEDVPPNISQVFKDLIPFTVSVVLLYGLELLVKGTLGVTVAESIGTLIAPLFSAADGYLGITLIFGAYAFFWFVGIHGPSIVEPAIAAITYANIDVNLHLIQAGQHADKVITSGTQMFIATMGGTGATLIVPFLFMWICKSDRNRAIGRASVVPTFFGVNEPILFGAPIVLNPIFFVPFIFAPIVNVWIFKFFVDTLNMNSFSANLPWVTPGPLGIVLGTNFQVLSFILAGLLVVVDTIIYYPFVKVYDEQILEEERSGKTNDALKEKVAANFNTAKADAVLGKADVAKEDVAANNNITKETNVLVLCAGGGTSGLLANALNKAAAEYNVPVKAAAGGYGAHREMLPEFDLVILAPQVASNFDDMKAETDKLGIKLVKTEGAQYIKLTRDGQGALAFVQQQFD</sequence>
<gene>
    <name evidence="5" type="primary">lacE</name>
</gene>
<name>PTLCB_LACLL</name>
<evidence type="ECO:0000250" key="1">
    <source>
        <dbReference type="UniProtKB" id="P24400"/>
    </source>
</evidence>
<evidence type="ECO:0000255" key="2">
    <source>
        <dbReference type="PROSITE-ProRule" id="PRU00423"/>
    </source>
</evidence>
<evidence type="ECO:0000255" key="3">
    <source>
        <dbReference type="PROSITE-ProRule" id="PRU00428"/>
    </source>
</evidence>
<evidence type="ECO:0000269" key="4">
    <source>
    </source>
</evidence>
<evidence type="ECO:0000303" key="5">
    <source>
    </source>
</evidence>
<evidence type="ECO:0000305" key="6">
    <source>
    </source>
</evidence>
<protein>
    <recommendedName>
        <fullName evidence="5">PTS system lactose-specific EIICB component</fullName>
    </recommendedName>
    <alternativeName>
        <fullName evidence="5">EIICB-Lac</fullName>
        <shortName evidence="5">EII-Lac</shortName>
    </alternativeName>
    <domain>
        <recommendedName>
            <fullName evidence="5">PTS system lactose-specific EIIC component</fullName>
        </recommendedName>
        <alternativeName>
            <fullName evidence="5">Lactose permease IIC component</fullName>
        </alternativeName>
    </domain>
    <domain>
        <recommendedName>
            <fullName evidence="5">PTS system lactose-specific EIIB component</fullName>
            <ecNumber evidence="1">2.7.1.207</ecNumber>
        </recommendedName>
        <alternativeName>
            <fullName evidence="5">Lactose-specific phosphotransferase enzyme IIB component</fullName>
        </alternativeName>
    </domain>
</protein>
<accession>P23531</accession>
<dbReference type="EC" id="2.7.1.207" evidence="1"/>
<dbReference type="EMBL" id="M60447">
    <property type="protein sequence ID" value="AAA25182.1"/>
    <property type="molecule type" value="Genomic_DNA"/>
</dbReference>
<dbReference type="PIR" id="B23696">
    <property type="entry name" value="B23696"/>
</dbReference>
<dbReference type="SMR" id="P23531"/>
<dbReference type="GO" id="GO:0005886">
    <property type="term" value="C:plasma membrane"/>
    <property type="evidence" value="ECO:0007669"/>
    <property type="project" value="UniProtKB-SubCell"/>
</dbReference>
<dbReference type="GO" id="GO:0016301">
    <property type="term" value="F:kinase activity"/>
    <property type="evidence" value="ECO:0007669"/>
    <property type="project" value="UniProtKB-KW"/>
</dbReference>
<dbReference type="GO" id="GO:0022869">
    <property type="term" value="F:protein-N(PI)-phosphohistidine-lactose phosphotransferase system transporter activity"/>
    <property type="evidence" value="ECO:0007669"/>
    <property type="project" value="InterPro"/>
</dbReference>
<dbReference type="GO" id="GO:1901264">
    <property type="term" value="P:carbohydrate derivative transport"/>
    <property type="evidence" value="ECO:0007669"/>
    <property type="project" value="TreeGrafter"/>
</dbReference>
<dbReference type="GO" id="GO:0009401">
    <property type="term" value="P:phosphoenolpyruvate-dependent sugar phosphotransferase system"/>
    <property type="evidence" value="ECO:0007669"/>
    <property type="project" value="UniProtKB-KW"/>
</dbReference>
<dbReference type="CDD" id="cd05565">
    <property type="entry name" value="PTS_IIB_lactose"/>
    <property type="match status" value="1"/>
</dbReference>
<dbReference type="Gene3D" id="3.40.50.2300">
    <property type="match status" value="1"/>
</dbReference>
<dbReference type="InterPro" id="IPR004801">
    <property type="entry name" value="LacE"/>
</dbReference>
<dbReference type="InterPro" id="IPR036095">
    <property type="entry name" value="PTS_EIIB-like_sf"/>
</dbReference>
<dbReference type="InterPro" id="IPR003501">
    <property type="entry name" value="PTS_EIIB_2/3"/>
</dbReference>
<dbReference type="InterPro" id="IPR013012">
    <property type="entry name" value="PTS_EIIB_3"/>
</dbReference>
<dbReference type="InterPro" id="IPR003352">
    <property type="entry name" value="PTS_EIIC"/>
</dbReference>
<dbReference type="InterPro" id="IPR004501">
    <property type="entry name" value="PTS_EIIC_3"/>
</dbReference>
<dbReference type="InterPro" id="IPR041713">
    <property type="entry name" value="PTS_IIB"/>
</dbReference>
<dbReference type="InterPro" id="IPR051088">
    <property type="entry name" value="PTS_Sugar-EIIC/EIIB"/>
</dbReference>
<dbReference type="InterPro" id="IPR001763">
    <property type="entry name" value="Rhodanese-like_dom"/>
</dbReference>
<dbReference type="NCBIfam" id="TIGR00394">
    <property type="entry name" value="lac_pts_IIC"/>
    <property type="match status" value="1"/>
</dbReference>
<dbReference type="NCBIfam" id="TIGR00410">
    <property type="entry name" value="lacE"/>
    <property type="match status" value="1"/>
</dbReference>
<dbReference type="NCBIfam" id="TIGR00853">
    <property type="entry name" value="pts-lac"/>
    <property type="match status" value="1"/>
</dbReference>
<dbReference type="PANTHER" id="PTHR33989">
    <property type="match status" value="1"/>
</dbReference>
<dbReference type="PANTHER" id="PTHR33989:SF8">
    <property type="entry name" value="PERMEASE IIC COMPONENT"/>
    <property type="match status" value="1"/>
</dbReference>
<dbReference type="Pfam" id="PF02378">
    <property type="entry name" value="PTS_EIIC"/>
    <property type="match status" value="1"/>
</dbReference>
<dbReference type="Pfam" id="PF02302">
    <property type="entry name" value="PTS_IIB"/>
    <property type="match status" value="1"/>
</dbReference>
<dbReference type="SUPFAM" id="SSF52794">
    <property type="entry name" value="PTS system IIB component-like"/>
    <property type="match status" value="1"/>
</dbReference>
<dbReference type="PROSITE" id="PS51100">
    <property type="entry name" value="PTS_EIIB_TYPE_3"/>
    <property type="match status" value="1"/>
</dbReference>
<dbReference type="PROSITE" id="PS51105">
    <property type="entry name" value="PTS_EIIC_TYPE_3"/>
    <property type="match status" value="1"/>
</dbReference>
<comment type="function">
    <text evidence="6">The phosphoenolpyruvate-dependent sugar phosphotransferase system (sugar PTS), a major carbohydrate active transport system, catalyzes the phosphorylation of incoming sugar substrates concomitantly with their translocation across the cell membrane. The enzyme II LacEF PTS system is involved in lactose transport.</text>
</comment>
<comment type="catalytic activity">
    <reaction evidence="1">
        <text>lactose(out) + N(pros)-phospho-L-histidyl-[protein] = lactose 6-phosphate(in) + L-histidyl-[protein]</text>
        <dbReference type="Rhea" id="RHEA:42400"/>
        <dbReference type="Rhea" id="RHEA-COMP:9745"/>
        <dbReference type="Rhea" id="RHEA-COMP:9746"/>
        <dbReference type="ChEBI" id="CHEBI:17716"/>
        <dbReference type="ChEBI" id="CHEBI:29979"/>
        <dbReference type="ChEBI" id="CHEBI:64837"/>
        <dbReference type="ChEBI" id="CHEBI:79080"/>
        <dbReference type="EC" id="2.7.1.207"/>
    </reaction>
</comment>
<comment type="subcellular location">
    <subcellularLocation>
        <location evidence="3">Cell membrane</location>
        <topology evidence="3 6">Multi-pass membrane protein</topology>
    </subcellularLocation>
</comment>
<comment type="induction">
    <text evidence="4">By lactose. The operon consists of lacABCDFEGX. A second transcript of only lacF and lacE is also lactose-induced.</text>
</comment>
<comment type="domain">
    <text evidence="3">The EIIC type-3 domain forms the PTS system translocation channel and contains the specific substrate-binding site.</text>
</comment>
<comment type="domain">
    <text evidence="2">The PTS EIIB type-3 domain is phosphorylated by phospho-EIIA on a cysteinyl residue. Then, it transfers the phosphoryl group to the sugar substrate concomitantly with the sugar uptake processed by the PTS EIIC type-3 domain.</text>
</comment>
<comment type="miscellaneous">
    <text evidence="4">This gene was sequenced from pMG820, a laboratory-derived deletion of the naturally occurring plasmid pLP712.</text>
</comment>
<proteinExistence type="evidence at transcript level"/>
<organism>
    <name type="scientific">Lactococcus lactis subsp. lactis</name>
    <name type="common">Streptococcus lactis</name>
    <dbReference type="NCBI Taxonomy" id="1360"/>
    <lineage>
        <taxon>Bacteria</taxon>
        <taxon>Bacillati</taxon>
        <taxon>Bacillota</taxon>
        <taxon>Bacilli</taxon>
        <taxon>Lactobacillales</taxon>
        <taxon>Streptococcaceae</taxon>
        <taxon>Lactococcus</taxon>
    </lineage>
</organism>
<geneLocation type="plasmid">
    <name>pLP712</name>
</geneLocation>
<keyword id="KW-1003">Cell membrane</keyword>
<keyword id="KW-0418">Kinase</keyword>
<keyword id="KW-0472">Membrane</keyword>
<keyword id="KW-0597">Phosphoprotein</keyword>
<keyword id="KW-0598">Phosphotransferase system</keyword>
<keyword id="KW-0614">Plasmid</keyword>
<keyword id="KW-0762">Sugar transport</keyword>
<keyword id="KW-0808">Transferase</keyword>
<keyword id="KW-0812">Transmembrane</keyword>
<keyword id="KW-1133">Transmembrane helix</keyword>
<keyword id="KW-0813">Transport</keyword>
<reference key="1">
    <citation type="journal article" date="1990" name="J. Biol. Chem.">
        <title>Characterization of the lactose-specific enzymes of the phosphotransferase system in Lactococcus lactis.</title>
        <authorList>
            <person name="de Vos W.M."/>
            <person name="Boerrigter I.J."/>
            <person name="van Rooyen R.J."/>
            <person name="Reiche B."/>
            <person name="Hengstenberg W."/>
        </authorList>
    </citation>
    <scope>NUCLEOTIDE SEQUENCE [GENOMIC DNA]</scope>
    <scope>FUNCTION</scope>
    <scope>OPERON STRUCTURE</scope>
    <scope>INDUCTION</scope>
    <scope>SUBCELLULAR LOCATION</scope>
    <source>
        <strain>MG1820</strain>
    </source>
</reference>